<keyword id="KW-1003">Cell membrane</keyword>
<keyword id="KW-0966">Cell projection</keyword>
<keyword id="KW-0256">Endoplasmic reticulum</keyword>
<keyword id="KW-0333">Golgi apparatus</keyword>
<keyword id="KW-0378">Hydrolase</keyword>
<keyword id="KW-0472">Membrane</keyword>
<keyword id="KW-0914">Notch signaling pathway</keyword>
<keyword id="KW-0645">Protease</keyword>
<keyword id="KW-1185">Reference proteome</keyword>
<keyword id="KW-0770">Synapse</keyword>
<keyword id="KW-0812">Transmembrane</keyword>
<keyword id="KW-1133">Transmembrane helix</keyword>
<name>PSN1_DANRE</name>
<gene>
    <name type="primary">psen1</name>
</gene>
<feature type="chain" id="PRO_0000073897" description="Presenilin-1">
    <location>
        <begin position="1"/>
        <end position="456"/>
    </location>
</feature>
<feature type="topological domain" description="Cytoplasmic" evidence="1">
    <location>
        <begin position="1"/>
        <end position="70"/>
    </location>
</feature>
<feature type="transmembrane region" description="Helical" evidence="1">
    <location>
        <begin position="71"/>
        <end position="91"/>
    </location>
</feature>
<feature type="topological domain" description="Lumenal" evidence="1">
    <location>
        <begin position="92"/>
        <end position="121"/>
    </location>
</feature>
<feature type="transmembrane region" description="Helical" evidence="1">
    <location>
        <begin position="122"/>
        <end position="142"/>
    </location>
</feature>
<feature type="topological domain" description="Cytoplasmic" evidence="1">
    <location>
        <begin position="143"/>
        <end position="155"/>
    </location>
</feature>
<feature type="transmembrane region" description="Helical" evidence="1">
    <location>
        <begin position="156"/>
        <end position="178"/>
    </location>
</feature>
<feature type="topological domain" description="Lumenal" evidence="1">
    <location>
        <begin position="179"/>
        <end position="183"/>
    </location>
</feature>
<feature type="transmembrane region" description="Helical" evidence="1">
    <location>
        <begin position="184"/>
        <end position="205"/>
    </location>
</feature>
<feature type="topological domain" description="Cytoplasmic" evidence="1">
    <location>
        <begin position="206"/>
        <end position="209"/>
    </location>
</feature>
<feature type="transmembrane region" description="Helical" evidence="1">
    <location>
        <begin position="210"/>
        <end position="230"/>
    </location>
</feature>
<feature type="topological domain" description="Lumenal" evidence="1">
    <location>
        <begin position="231"/>
        <end position="237"/>
    </location>
</feature>
<feature type="transmembrane region" description="Helical" evidence="1">
    <location>
        <begin position="238"/>
        <end position="261"/>
    </location>
</feature>
<feature type="topological domain" description="Cytoplasmic" evidence="1">
    <location>
        <begin position="262"/>
        <end position="369"/>
    </location>
</feature>
<feature type="transmembrane region" description="Helical" evidence="1">
    <location>
        <begin position="370"/>
        <end position="390"/>
    </location>
</feature>
<feature type="topological domain" description="Lumenal" evidence="1">
    <location>
        <begin position="391"/>
        <end position="396"/>
    </location>
</feature>
<feature type="transmembrane region" description="Helical" evidence="1">
    <location>
        <begin position="397"/>
        <end position="417"/>
    </location>
</feature>
<feature type="topological domain" description="Cytoplasmic" evidence="1">
    <location>
        <begin position="418"/>
        <end position="421"/>
    </location>
</feature>
<feature type="transmembrane region" description="Helical" evidence="1">
    <location>
        <begin position="422"/>
        <end position="442"/>
    </location>
</feature>
<feature type="topological domain" description="Lumenal" evidence="1">
    <location>
        <begin position="443"/>
        <end position="456"/>
    </location>
</feature>
<feature type="region of interest" description="Disordered" evidence="3">
    <location>
        <begin position="9"/>
        <end position="56"/>
    </location>
</feature>
<feature type="region of interest" description="Important for cleavage of target proteins" evidence="1">
    <location>
        <begin position="277"/>
        <end position="279"/>
    </location>
</feature>
<feature type="region of interest" description="Disordered" evidence="3">
    <location>
        <begin position="332"/>
        <end position="365"/>
    </location>
</feature>
<feature type="region of interest" description="Important for cleavage of target proteins" evidence="1">
    <location>
        <begin position="366"/>
        <end position="370"/>
    </location>
</feature>
<feature type="region of interest" description="Important for cleavage of target proteins" evidence="1">
    <location>
        <begin position="421"/>
        <end position="423"/>
    </location>
</feature>
<feature type="short sequence motif" description="PAL" evidence="5">
    <location>
        <begin position="422"/>
        <end position="424"/>
    </location>
</feature>
<feature type="active site" evidence="1">
    <location>
        <position position="246"/>
    </location>
</feature>
<feature type="active site" evidence="6">
    <location>
        <position position="374"/>
    </location>
</feature>
<feature type="site" description="Cleavage; alternate" evidence="1">
    <location>
        <begin position="280"/>
        <end position="281"/>
    </location>
</feature>
<feature type="site" description="Cleavage; alternate" evidence="1">
    <location>
        <begin position="281"/>
        <end position="282"/>
    </location>
</feature>
<feature type="site" description="Cleavage" evidence="1">
    <location>
        <begin position="287"/>
        <end position="288"/>
    </location>
</feature>
<feature type="mutagenesis site" description="Abolishes its endoproteolysis. Probably loss of function." evidence="4">
    <original>D</original>
    <variation>A</variation>
    <location>
        <position position="374"/>
    </location>
</feature>
<feature type="sequence conflict" description="In Ref. 2; AAH54639." evidence="5" ref="2">
    <location>
        <position position="308"/>
    </location>
</feature>
<feature type="sequence conflict" description="In Ref. 2; AAH54639." evidence="5" ref="2">
    <original>A</original>
    <variation>P</variation>
    <location>
        <position position="317"/>
    </location>
</feature>
<accession>Q9W6T7</accession>
<reference key="1">
    <citation type="journal article" date="1999" name="Biochemistry">
        <title>Zebrafish (Danio rerio) presenilin promotes aberrant amyloid beta-peptide production and requires a critical aspartate residue for its function in amyloidogenesis.</title>
        <authorList>
            <person name="Leimer U."/>
            <person name="Lun K."/>
            <person name="Romig H."/>
            <person name="Walter J."/>
            <person name="Gruenberg J."/>
            <person name="Brand M."/>
            <person name="Haass C."/>
        </authorList>
    </citation>
    <scope>NUCLEOTIDE SEQUENCE [MRNA]</scope>
    <scope>FUNCTION</scope>
    <scope>CATALYTIC ACTIVITY</scope>
    <scope>PROTEOLYTIC CLEAVAGE</scope>
    <scope>MUTAGENESIS OF ASP-374</scope>
    <scope>ACTIVE SITE</scope>
</reference>
<reference key="2">
    <citation type="submission" date="2003-07" db="EMBL/GenBank/DDBJ databases">
        <authorList>
            <consortium name="NIH - Zebrafish Gene Collection (ZGC) project"/>
        </authorList>
    </citation>
    <scope>NUCLEOTIDE SEQUENCE [LARGE SCALE MRNA]</scope>
    <source>
        <tissue>Embryo</tissue>
    </source>
</reference>
<sequence length="456" mass="50981">MADLVQNAANNVLNDGMDTSRHTSSTAAPPSRNEVELNGQPPTAPPPQVVTDSEEDEDEELTLKYGAKHVIMLFIPVTLCMVVVVATIKSVSFYTQKDGQQLIYTPFREDTETVGQRALHSMLNAIIMISVIVVMTLVLVVLYKYRCYKVIQAWLFFSNLLLLFFFSLIYLGEVFKTYNVAMDYFTLALIIWNFGVVGMICIHWKGPLRLQQAYLIMISALMALVFIKYLPEWTAWLILAAISVYDLLAVLCPKGPLRILVETAQERNEAIFPALIYSSTMVWLFNMADSAETRNNSSHPVPQQENQVVAMAPTAQAEDDGGFTPAWVDHQQHQLGPMQSTEESRRQIQEMPSARPPPPADDDEERGVKLGLGDFIFYSMLVGKASATASGDWNTTLACFVAILIGLCLTLLLLAIFKKALPALPISITFGLVFYFATDNLVRPFMDQLAVHQFYI</sequence>
<dbReference type="EC" id="3.4.23.-" evidence="4"/>
<dbReference type="EMBL" id="AJ132931">
    <property type="protein sequence ID" value="CAB40386.1"/>
    <property type="molecule type" value="mRNA"/>
</dbReference>
<dbReference type="EMBL" id="BC054639">
    <property type="protein sequence ID" value="AAH54639.1"/>
    <property type="status" value="ALT_INIT"/>
    <property type="molecule type" value="mRNA"/>
</dbReference>
<dbReference type="RefSeq" id="NP_571099.1">
    <property type="nucleotide sequence ID" value="NM_131024.1"/>
</dbReference>
<dbReference type="SMR" id="Q9W6T7"/>
<dbReference type="FunCoup" id="Q9W6T7">
    <property type="interactions" value="1510"/>
</dbReference>
<dbReference type="IntAct" id="Q9W6T7">
    <property type="interactions" value="1"/>
</dbReference>
<dbReference type="STRING" id="7955.ENSDARP00000136264"/>
<dbReference type="MEROPS" id="A22.001"/>
<dbReference type="PaxDb" id="7955-ENSDARP00000030180"/>
<dbReference type="GeneID" id="30221"/>
<dbReference type="KEGG" id="dre:30221"/>
<dbReference type="AGR" id="ZFIN:ZDB-GENE-991119-4"/>
<dbReference type="CTD" id="5663"/>
<dbReference type="ZFIN" id="ZDB-GENE-991119-4">
    <property type="gene designation" value="psen1"/>
</dbReference>
<dbReference type="eggNOG" id="KOG2736">
    <property type="taxonomic scope" value="Eukaryota"/>
</dbReference>
<dbReference type="InParanoid" id="Q9W6T7"/>
<dbReference type="OrthoDB" id="20287at2759"/>
<dbReference type="PhylomeDB" id="Q9W6T7"/>
<dbReference type="Reactome" id="R-DRE-1251985">
    <property type="pathway name" value="Nuclear signaling by ERBB4"/>
</dbReference>
<dbReference type="Reactome" id="R-DRE-193692">
    <property type="pathway name" value="Regulated proteolysis of p75NTR"/>
</dbReference>
<dbReference type="Reactome" id="R-DRE-3928665">
    <property type="pathway name" value="EPH-ephrin mediated repulsion of cells"/>
</dbReference>
<dbReference type="Reactome" id="R-DRE-6798695">
    <property type="pathway name" value="Neutrophil degranulation"/>
</dbReference>
<dbReference type="Reactome" id="R-DRE-9839383">
    <property type="pathway name" value="TGFBR3 PTM regulation"/>
</dbReference>
<dbReference type="PRO" id="PR:Q9W6T7"/>
<dbReference type="Proteomes" id="UP000000437">
    <property type="component" value="Chromosome 17"/>
</dbReference>
<dbReference type="GO" id="GO:0030424">
    <property type="term" value="C:axon"/>
    <property type="evidence" value="ECO:0007669"/>
    <property type="project" value="UniProtKB-SubCell"/>
</dbReference>
<dbReference type="GO" id="GO:0005783">
    <property type="term" value="C:endoplasmic reticulum"/>
    <property type="evidence" value="ECO:0000250"/>
    <property type="project" value="UniProtKB"/>
</dbReference>
<dbReference type="GO" id="GO:0005789">
    <property type="term" value="C:endoplasmic reticulum membrane"/>
    <property type="evidence" value="ECO:0007669"/>
    <property type="project" value="UniProtKB-SubCell"/>
</dbReference>
<dbReference type="GO" id="GO:0070765">
    <property type="term" value="C:gamma-secretase complex"/>
    <property type="evidence" value="ECO:0000250"/>
    <property type="project" value="UniProtKB"/>
</dbReference>
<dbReference type="GO" id="GO:0005794">
    <property type="term" value="C:Golgi apparatus"/>
    <property type="evidence" value="ECO:0000250"/>
    <property type="project" value="UniProtKB"/>
</dbReference>
<dbReference type="GO" id="GO:0000139">
    <property type="term" value="C:Golgi membrane"/>
    <property type="evidence" value="ECO:0007669"/>
    <property type="project" value="UniProtKB-SubCell"/>
</dbReference>
<dbReference type="GO" id="GO:0016020">
    <property type="term" value="C:membrane"/>
    <property type="evidence" value="ECO:0000314"/>
    <property type="project" value="ZFIN"/>
</dbReference>
<dbReference type="GO" id="GO:0005739">
    <property type="term" value="C:mitochondrion"/>
    <property type="evidence" value="ECO:0000250"/>
    <property type="project" value="UniProtKB"/>
</dbReference>
<dbReference type="GO" id="GO:0005886">
    <property type="term" value="C:plasma membrane"/>
    <property type="evidence" value="ECO:0000250"/>
    <property type="project" value="UniProtKB"/>
</dbReference>
<dbReference type="GO" id="GO:0045202">
    <property type="term" value="C:synapse"/>
    <property type="evidence" value="ECO:0007669"/>
    <property type="project" value="UniProtKB-SubCell"/>
</dbReference>
<dbReference type="GO" id="GO:0042500">
    <property type="term" value="F:aspartic endopeptidase activity, intramembrane cleaving"/>
    <property type="evidence" value="ECO:0000250"/>
    <property type="project" value="UniProtKB"/>
</dbReference>
<dbReference type="GO" id="GO:0034205">
    <property type="term" value="P:amyloid-beta formation"/>
    <property type="evidence" value="ECO:0000314"/>
    <property type="project" value="ZFIN"/>
</dbReference>
<dbReference type="GO" id="GO:0007420">
    <property type="term" value="P:brain development"/>
    <property type="evidence" value="ECO:0000315"/>
    <property type="project" value="ZFIN"/>
</dbReference>
<dbReference type="GO" id="GO:0055074">
    <property type="term" value="P:calcium ion homeostasis"/>
    <property type="evidence" value="ECO:0000318"/>
    <property type="project" value="GO_Central"/>
</dbReference>
<dbReference type="GO" id="GO:0060070">
    <property type="term" value="P:canonical Wnt signaling pathway"/>
    <property type="evidence" value="ECO:0000315"/>
    <property type="project" value="ZFIN"/>
</dbReference>
<dbReference type="GO" id="GO:0001946">
    <property type="term" value="P:lymphangiogenesis"/>
    <property type="evidence" value="ECO:0000315"/>
    <property type="project" value="ZFIN"/>
</dbReference>
<dbReference type="GO" id="GO:0030318">
    <property type="term" value="P:melanocyte differentiation"/>
    <property type="evidence" value="ECO:0000315"/>
    <property type="project" value="ZFIN"/>
</dbReference>
<dbReference type="GO" id="GO:0006509">
    <property type="term" value="P:membrane protein ectodomain proteolysis"/>
    <property type="evidence" value="ECO:0000250"/>
    <property type="project" value="UniProtKB"/>
</dbReference>
<dbReference type="GO" id="GO:0007219">
    <property type="term" value="P:Notch signaling pathway"/>
    <property type="evidence" value="ECO:0000314"/>
    <property type="project" value="ZFIN"/>
</dbReference>
<dbReference type="GO" id="GO:0071632">
    <property type="term" value="P:optomotor response"/>
    <property type="evidence" value="ECO:0000315"/>
    <property type="project" value="ZFIN"/>
</dbReference>
<dbReference type="GO" id="GO:0016485">
    <property type="term" value="P:protein processing"/>
    <property type="evidence" value="ECO:0000250"/>
    <property type="project" value="UniProtKB"/>
</dbReference>
<dbReference type="GO" id="GO:0060828">
    <property type="term" value="P:regulation of canonical Wnt signaling pathway"/>
    <property type="evidence" value="ECO:0000250"/>
    <property type="project" value="UniProtKB"/>
</dbReference>
<dbReference type="GO" id="GO:0001666">
    <property type="term" value="P:response to hypoxia"/>
    <property type="evidence" value="ECO:0000314"/>
    <property type="project" value="ZFIN"/>
</dbReference>
<dbReference type="GO" id="GO:0061053">
    <property type="term" value="P:somite development"/>
    <property type="evidence" value="ECO:0000315"/>
    <property type="project" value="ZFIN"/>
</dbReference>
<dbReference type="GO" id="GO:0036269">
    <property type="term" value="P:swimming behavior"/>
    <property type="evidence" value="ECO:0000315"/>
    <property type="project" value="ZFIN"/>
</dbReference>
<dbReference type="FunFam" id="1.10.472.100:FF:000001">
    <property type="entry name" value="Presenilin"/>
    <property type="match status" value="1"/>
</dbReference>
<dbReference type="Gene3D" id="1.10.472.100">
    <property type="entry name" value="Presenilin"/>
    <property type="match status" value="1"/>
</dbReference>
<dbReference type="InterPro" id="IPR001108">
    <property type="entry name" value="Peptidase_A22A"/>
</dbReference>
<dbReference type="InterPro" id="IPR006639">
    <property type="entry name" value="Preselin/SPP"/>
</dbReference>
<dbReference type="InterPro" id="IPR042524">
    <property type="entry name" value="Presenilin_C"/>
</dbReference>
<dbReference type="PANTHER" id="PTHR10202">
    <property type="entry name" value="PRESENILIN"/>
    <property type="match status" value="1"/>
</dbReference>
<dbReference type="PANTHER" id="PTHR10202:SF18">
    <property type="entry name" value="PRESENILIN-1"/>
    <property type="match status" value="1"/>
</dbReference>
<dbReference type="Pfam" id="PF01080">
    <property type="entry name" value="Presenilin"/>
    <property type="match status" value="1"/>
</dbReference>
<dbReference type="PRINTS" id="PR01072">
    <property type="entry name" value="PRESENILIN"/>
</dbReference>
<dbReference type="SMART" id="SM00730">
    <property type="entry name" value="PSN"/>
    <property type="match status" value="1"/>
</dbReference>
<evidence type="ECO:0000250" key="1">
    <source>
        <dbReference type="UniProtKB" id="P49768"/>
    </source>
</evidence>
<evidence type="ECO:0000250" key="2">
    <source>
        <dbReference type="UniProtKB" id="Q4JIM4"/>
    </source>
</evidence>
<evidence type="ECO:0000256" key="3">
    <source>
        <dbReference type="SAM" id="MobiDB-lite"/>
    </source>
</evidence>
<evidence type="ECO:0000269" key="4">
    <source>
    </source>
</evidence>
<evidence type="ECO:0000305" key="5"/>
<evidence type="ECO:0000305" key="6">
    <source>
    </source>
</evidence>
<organism>
    <name type="scientific">Danio rerio</name>
    <name type="common">Zebrafish</name>
    <name type="synonym">Brachydanio rerio</name>
    <dbReference type="NCBI Taxonomy" id="7955"/>
    <lineage>
        <taxon>Eukaryota</taxon>
        <taxon>Metazoa</taxon>
        <taxon>Chordata</taxon>
        <taxon>Craniata</taxon>
        <taxon>Vertebrata</taxon>
        <taxon>Euteleostomi</taxon>
        <taxon>Actinopterygii</taxon>
        <taxon>Neopterygii</taxon>
        <taxon>Teleostei</taxon>
        <taxon>Ostariophysi</taxon>
        <taxon>Cypriniformes</taxon>
        <taxon>Danionidae</taxon>
        <taxon>Danioninae</taxon>
        <taxon>Danio</taxon>
    </lineage>
</organism>
<proteinExistence type="evidence at protein level"/>
<protein>
    <recommendedName>
        <fullName>Presenilin-1</fullName>
        <shortName>PS-1</shortName>
        <shortName>Zf-PS1</shortName>
        <ecNumber evidence="4">3.4.23.-</ecNumber>
    </recommendedName>
</protein>
<comment type="function">
    <text evidence="1 4">Catalytic subunit of the gamma-secretase complex, an endoprotease complex that catalyzes the intramembrane cleavage of integral membrane proteins such as Notch receptors and APP (amyloid-beta precursor protein) (PubMed:10521267). Requires the presence of the other members of the gamma-secretase complex for protease activity. Plays a role in Notch and Wnt signaling cascades and regulation of downstream processes via its role in processing key regulatory proteins (By similarity).</text>
</comment>
<comment type="subunit">
    <text evidence="1">Homodimer. The functional gamma-secretase complex is composed of at least four polypeptides: a presenilin homodimer (PSEN1 or PSEN2), nicastrin (NCSTN), APH1 (APH1A or APH1B) and PEN2. Such minimal complex is sufficient for secretase activity.</text>
</comment>
<comment type="subcellular location">
    <subcellularLocation>
        <location evidence="1">Endoplasmic reticulum membrane</location>
        <topology evidence="1">Multi-pass membrane protein</topology>
    </subcellularLocation>
    <subcellularLocation>
        <location evidence="1">Golgi apparatus membrane</location>
        <topology evidence="1">Multi-pass membrane protein</topology>
    </subcellularLocation>
    <subcellularLocation>
        <location evidence="1">Cytoplasmic granule</location>
    </subcellularLocation>
    <subcellularLocation>
        <location evidence="1">Cell membrane</location>
    </subcellularLocation>
    <subcellularLocation>
        <location evidence="2">Cell projection</location>
        <location evidence="2">Axon</location>
    </subcellularLocation>
    <subcellularLocation>
        <location evidence="2">Synapse</location>
    </subcellularLocation>
    <subcellularLocation>
        <location evidence="1">Cell projection</location>
        <location evidence="1">Neuron projection</location>
    </subcellularLocation>
</comment>
<comment type="developmental stage">
    <text>Expressed both maternally and zygotically. Ubiquitously expressed during embryogenesis.</text>
</comment>
<comment type="domain">
    <text evidence="1">The PAL motif is required for normal active site conformation.</text>
</comment>
<comment type="domain">
    <text evidence="1">Substrates, such as NOTCH1 and APP peptides, are bound between PSEN1 transmembrane domains and via the first lumenal loop and the cytoplasmic loop between the sixth and seventh transmembrane domains. Substrate binding causes a conformation change and formation of an intermolecular antiparallel beta-sheet between PSEN1 and its substrates.</text>
</comment>
<comment type="PTM">
    <text evidence="4">Cleaved, probably through autocleavage.</text>
</comment>
<comment type="PTM">
    <text evidence="1">Heterogeneous proteolytic processing generates N-terminal (NTF) and C-terminal (CTF) fragments of approximately 35 and 20 kDa, respectively. During apoptosis, the C-terminal fragment (CTF) is further cleaved by a caspase.</text>
</comment>
<comment type="similarity">
    <text evidence="5">Belongs to the peptidase A22A family.</text>
</comment>
<comment type="sequence caution" evidence="5">
    <conflict type="erroneous initiation">
        <sequence resource="EMBL-CDS" id="AAH54639"/>
    </conflict>
    <text>Truncated N-terminus.</text>
</comment>